<evidence type="ECO:0000255" key="1">
    <source>
        <dbReference type="HAMAP-Rule" id="MF_02011"/>
    </source>
</evidence>
<evidence type="ECO:0000256" key="2">
    <source>
        <dbReference type="SAM" id="MobiDB-lite"/>
    </source>
</evidence>
<organism>
    <name type="scientific">Staphylococcus haemolyticus (strain JCSC1435)</name>
    <dbReference type="NCBI Taxonomy" id="279808"/>
    <lineage>
        <taxon>Bacteria</taxon>
        <taxon>Bacillati</taxon>
        <taxon>Bacillota</taxon>
        <taxon>Bacilli</taxon>
        <taxon>Bacillales</taxon>
        <taxon>Staphylococcaceae</taxon>
        <taxon>Staphylococcus</taxon>
    </lineage>
</organism>
<proteinExistence type="inferred from homology"/>
<name>GPSB_STAHJ</name>
<sequence>MADVSLKLSAKDIYEKDFEKTMARGYRREEVDAFLDDIITDYQKMADMNNEVVKLSEENNKLKKEVEELRLRVATSRPSDNKSFSSNNSSSSNNNVDILKRISNLEKAVFGK</sequence>
<comment type="function">
    <text evidence="1">Divisome component that associates with the complex late in its assembly, after the Z-ring is formed, and is dependent on DivIC and PBP2B for its recruitment to the divisome. Together with EzrA, is a key component of the system that regulates PBP1 localization during cell cycle progression. Its main role could be the removal of PBP1 from the cell pole after pole maturation is completed. Also contributes to the recruitment of PBP1 to the division complex. Not essential for septum formation.</text>
</comment>
<comment type="subunit">
    <text evidence="1">Forms polymers through the coiled coil domains. Interacts with PBP1, MreC and EzrA.</text>
</comment>
<comment type="subcellular location">
    <subcellularLocation>
        <location evidence="1">Cytoplasm</location>
    </subcellularLocation>
    <text evidence="1">Shuttles between the lateral wall and the division site in a cell cycle-dependent manner.</text>
</comment>
<comment type="similarity">
    <text evidence="1">Belongs to the GpsB family.</text>
</comment>
<dbReference type="EMBL" id="AP006716">
    <property type="protein sequence ID" value="BAE04775.1"/>
    <property type="molecule type" value="Genomic_DNA"/>
</dbReference>
<dbReference type="RefSeq" id="WP_011275761.1">
    <property type="nucleotide sequence ID" value="NC_007168.1"/>
</dbReference>
<dbReference type="SMR" id="Q4L6F0"/>
<dbReference type="GeneID" id="93780860"/>
<dbReference type="KEGG" id="sha:SH1466"/>
<dbReference type="eggNOG" id="COG3599">
    <property type="taxonomic scope" value="Bacteria"/>
</dbReference>
<dbReference type="HOGENOM" id="CLU_140309_1_0_9"/>
<dbReference type="OrthoDB" id="389699at2"/>
<dbReference type="Proteomes" id="UP000000543">
    <property type="component" value="Chromosome"/>
</dbReference>
<dbReference type="GO" id="GO:0005737">
    <property type="term" value="C:cytoplasm"/>
    <property type="evidence" value="ECO:0007669"/>
    <property type="project" value="UniProtKB-SubCell"/>
</dbReference>
<dbReference type="GO" id="GO:0051301">
    <property type="term" value="P:cell division"/>
    <property type="evidence" value="ECO:0007669"/>
    <property type="project" value="UniProtKB-UniRule"/>
</dbReference>
<dbReference type="GO" id="GO:0008360">
    <property type="term" value="P:regulation of cell shape"/>
    <property type="evidence" value="ECO:0007669"/>
    <property type="project" value="UniProtKB-UniRule"/>
</dbReference>
<dbReference type="Gene3D" id="6.10.250.660">
    <property type="match status" value="1"/>
</dbReference>
<dbReference type="HAMAP" id="MF_02011">
    <property type="entry name" value="GpsB"/>
    <property type="match status" value="1"/>
</dbReference>
<dbReference type="InterPro" id="IPR011229">
    <property type="entry name" value="Cell_cycle_GpsB"/>
</dbReference>
<dbReference type="InterPro" id="IPR019933">
    <property type="entry name" value="DivIVA_domain"/>
</dbReference>
<dbReference type="InterPro" id="IPR007793">
    <property type="entry name" value="DivIVA_fam"/>
</dbReference>
<dbReference type="NCBIfam" id="TIGR03544">
    <property type="entry name" value="DivI1A_domain"/>
    <property type="match status" value="1"/>
</dbReference>
<dbReference type="NCBIfam" id="NF010725">
    <property type="entry name" value="PRK14127.1"/>
    <property type="match status" value="1"/>
</dbReference>
<dbReference type="PANTHER" id="PTHR35794:SF1">
    <property type="entry name" value="CELL CYCLE PROTEIN GPSB"/>
    <property type="match status" value="1"/>
</dbReference>
<dbReference type="PANTHER" id="PTHR35794">
    <property type="entry name" value="CELL DIVISION PROTEIN DIVIVA"/>
    <property type="match status" value="1"/>
</dbReference>
<dbReference type="Pfam" id="PF05103">
    <property type="entry name" value="DivIVA"/>
    <property type="match status" value="1"/>
</dbReference>
<dbReference type="PIRSF" id="PIRSF029938">
    <property type="entry name" value="UCP029938"/>
    <property type="match status" value="1"/>
</dbReference>
<gene>
    <name evidence="1" type="primary">gpsB</name>
    <name type="ordered locus">SH1466</name>
</gene>
<feature type="chain" id="PRO_0000337947" description="Cell cycle protein GpsB">
    <location>
        <begin position="1"/>
        <end position="112"/>
    </location>
</feature>
<feature type="region of interest" description="Disordered" evidence="2">
    <location>
        <begin position="75"/>
        <end position="97"/>
    </location>
</feature>
<feature type="coiled-coil region" evidence="1">
    <location>
        <begin position="42"/>
        <end position="77"/>
    </location>
</feature>
<feature type="compositionally biased region" description="Low complexity" evidence="2">
    <location>
        <begin position="81"/>
        <end position="95"/>
    </location>
</feature>
<keyword id="KW-0131">Cell cycle</keyword>
<keyword id="KW-0132">Cell division</keyword>
<keyword id="KW-0133">Cell shape</keyword>
<keyword id="KW-0175">Coiled coil</keyword>
<keyword id="KW-0963">Cytoplasm</keyword>
<reference key="1">
    <citation type="journal article" date="2005" name="J. Bacteriol.">
        <title>Whole-genome sequencing of Staphylococcus haemolyticus uncovers the extreme plasticity of its genome and the evolution of human-colonizing staphylococcal species.</title>
        <authorList>
            <person name="Takeuchi F."/>
            <person name="Watanabe S."/>
            <person name="Baba T."/>
            <person name="Yuzawa H."/>
            <person name="Ito T."/>
            <person name="Morimoto Y."/>
            <person name="Kuroda M."/>
            <person name="Cui L."/>
            <person name="Takahashi M."/>
            <person name="Ankai A."/>
            <person name="Baba S."/>
            <person name="Fukui S."/>
            <person name="Lee J.C."/>
            <person name="Hiramatsu K."/>
        </authorList>
    </citation>
    <scope>NUCLEOTIDE SEQUENCE [LARGE SCALE GENOMIC DNA]</scope>
    <source>
        <strain>JCSC1435</strain>
    </source>
</reference>
<accession>Q4L6F0</accession>
<protein>
    <recommendedName>
        <fullName evidence="1">Cell cycle protein GpsB</fullName>
    </recommendedName>
    <alternativeName>
        <fullName evidence="1">Guiding PBP1-shuttling protein</fullName>
    </alternativeName>
</protein>